<proteinExistence type="inferred from homology"/>
<evidence type="ECO:0000255" key="1">
    <source>
        <dbReference type="HAMAP-Rule" id="MF_00736"/>
    </source>
</evidence>
<evidence type="ECO:0000305" key="2"/>
<feature type="chain" id="PRO_1000072803" description="Large ribosomal subunit protein uL11">
    <location>
        <begin position="1"/>
        <end position="142"/>
    </location>
</feature>
<protein>
    <recommendedName>
        <fullName evidence="1">Large ribosomal subunit protein uL11</fullName>
    </recommendedName>
    <alternativeName>
        <fullName evidence="2">50S ribosomal protein L11</fullName>
    </alternativeName>
</protein>
<organism>
    <name type="scientific">Parvibaculum lavamentivorans (strain DS-1 / DSM 13023 / NCIMB 13966)</name>
    <dbReference type="NCBI Taxonomy" id="402881"/>
    <lineage>
        <taxon>Bacteria</taxon>
        <taxon>Pseudomonadati</taxon>
        <taxon>Pseudomonadota</taxon>
        <taxon>Alphaproteobacteria</taxon>
        <taxon>Hyphomicrobiales</taxon>
        <taxon>Parvibaculaceae</taxon>
        <taxon>Parvibaculum</taxon>
    </lineage>
</organism>
<name>RL11_PARL1</name>
<reference key="1">
    <citation type="journal article" date="2011" name="Stand. Genomic Sci.">
        <title>Complete genome sequence of Parvibaculum lavamentivorans type strain (DS-1(T)).</title>
        <authorList>
            <person name="Schleheck D."/>
            <person name="Weiss M."/>
            <person name="Pitluck S."/>
            <person name="Bruce D."/>
            <person name="Land M.L."/>
            <person name="Han S."/>
            <person name="Saunders E."/>
            <person name="Tapia R."/>
            <person name="Detter C."/>
            <person name="Brettin T."/>
            <person name="Han J."/>
            <person name="Woyke T."/>
            <person name="Goodwin L."/>
            <person name="Pennacchio L."/>
            <person name="Nolan M."/>
            <person name="Cook A.M."/>
            <person name="Kjelleberg S."/>
            <person name="Thomas T."/>
        </authorList>
    </citation>
    <scope>NUCLEOTIDE SEQUENCE [LARGE SCALE GENOMIC DNA]</scope>
    <source>
        <strain>DS-1 / DSM 13023 / NCIMB 13966</strain>
    </source>
</reference>
<dbReference type="EMBL" id="CP000774">
    <property type="protein sequence ID" value="ABS64333.1"/>
    <property type="molecule type" value="Genomic_DNA"/>
</dbReference>
<dbReference type="RefSeq" id="WP_012111648.1">
    <property type="nucleotide sequence ID" value="NC_009719.1"/>
</dbReference>
<dbReference type="SMR" id="A7HWQ0"/>
<dbReference type="STRING" id="402881.Plav_2725"/>
<dbReference type="KEGG" id="pla:Plav_2725"/>
<dbReference type="eggNOG" id="COG0080">
    <property type="taxonomic scope" value="Bacteria"/>
</dbReference>
<dbReference type="HOGENOM" id="CLU_074237_2_1_5"/>
<dbReference type="OrthoDB" id="9802408at2"/>
<dbReference type="Proteomes" id="UP000006377">
    <property type="component" value="Chromosome"/>
</dbReference>
<dbReference type="GO" id="GO:0022625">
    <property type="term" value="C:cytosolic large ribosomal subunit"/>
    <property type="evidence" value="ECO:0007669"/>
    <property type="project" value="TreeGrafter"/>
</dbReference>
<dbReference type="GO" id="GO:0070180">
    <property type="term" value="F:large ribosomal subunit rRNA binding"/>
    <property type="evidence" value="ECO:0007669"/>
    <property type="project" value="UniProtKB-UniRule"/>
</dbReference>
<dbReference type="GO" id="GO:0003735">
    <property type="term" value="F:structural constituent of ribosome"/>
    <property type="evidence" value="ECO:0007669"/>
    <property type="project" value="InterPro"/>
</dbReference>
<dbReference type="GO" id="GO:0006412">
    <property type="term" value="P:translation"/>
    <property type="evidence" value="ECO:0007669"/>
    <property type="project" value="UniProtKB-UniRule"/>
</dbReference>
<dbReference type="CDD" id="cd00349">
    <property type="entry name" value="Ribosomal_L11"/>
    <property type="match status" value="1"/>
</dbReference>
<dbReference type="FunFam" id="1.10.10.250:FF:000001">
    <property type="entry name" value="50S ribosomal protein L11"/>
    <property type="match status" value="1"/>
</dbReference>
<dbReference type="FunFam" id="3.30.1550.10:FF:000001">
    <property type="entry name" value="50S ribosomal protein L11"/>
    <property type="match status" value="1"/>
</dbReference>
<dbReference type="Gene3D" id="1.10.10.250">
    <property type="entry name" value="Ribosomal protein L11, C-terminal domain"/>
    <property type="match status" value="1"/>
</dbReference>
<dbReference type="Gene3D" id="3.30.1550.10">
    <property type="entry name" value="Ribosomal protein L11/L12, N-terminal domain"/>
    <property type="match status" value="1"/>
</dbReference>
<dbReference type="HAMAP" id="MF_00736">
    <property type="entry name" value="Ribosomal_uL11"/>
    <property type="match status" value="1"/>
</dbReference>
<dbReference type="InterPro" id="IPR000911">
    <property type="entry name" value="Ribosomal_uL11"/>
</dbReference>
<dbReference type="InterPro" id="IPR006519">
    <property type="entry name" value="Ribosomal_uL11_bac-typ"/>
</dbReference>
<dbReference type="InterPro" id="IPR020783">
    <property type="entry name" value="Ribosomal_uL11_C"/>
</dbReference>
<dbReference type="InterPro" id="IPR036769">
    <property type="entry name" value="Ribosomal_uL11_C_sf"/>
</dbReference>
<dbReference type="InterPro" id="IPR020785">
    <property type="entry name" value="Ribosomal_uL11_CS"/>
</dbReference>
<dbReference type="InterPro" id="IPR020784">
    <property type="entry name" value="Ribosomal_uL11_N"/>
</dbReference>
<dbReference type="InterPro" id="IPR036796">
    <property type="entry name" value="Ribosomal_uL11_N_sf"/>
</dbReference>
<dbReference type="NCBIfam" id="TIGR01632">
    <property type="entry name" value="L11_bact"/>
    <property type="match status" value="1"/>
</dbReference>
<dbReference type="PANTHER" id="PTHR11661">
    <property type="entry name" value="60S RIBOSOMAL PROTEIN L12"/>
    <property type="match status" value="1"/>
</dbReference>
<dbReference type="PANTHER" id="PTHR11661:SF1">
    <property type="entry name" value="LARGE RIBOSOMAL SUBUNIT PROTEIN UL11M"/>
    <property type="match status" value="1"/>
</dbReference>
<dbReference type="Pfam" id="PF00298">
    <property type="entry name" value="Ribosomal_L11"/>
    <property type="match status" value="1"/>
</dbReference>
<dbReference type="Pfam" id="PF03946">
    <property type="entry name" value="Ribosomal_L11_N"/>
    <property type="match status" value="1"/>
</dbReference>
<dbReference type="SMART" id="SM00649">
    <property type="entry name" value="RL11"/>
    <property type="match status" value="1"/>
</dbReference>
<dbReference type="SUPFAM" id="SSF54747">
    <property type="entry name" value="Ribosomal L11/L12e N-terminal domain"/>
    <property type="match status" value="1"/>
</dbReference>
<dbReference type="SUPFAM" id="SSF46906">
    <property type="entry name" value="Ribosomal protein L11, C-terminal domain"/>
    <property type="match status" value="1"/>
</dbReference>
<dbReference type="PROSITE" id="PS00359">
    <property type="entry name" value="RIBOSOMAL_L11"/>
    <property type="match status" value="1"/>
</dbReference>
<accession>A7HWQ0</accession>
<sequence length="142" mass="14904">MAKKIEGYIKLQVPAGAANPSPPIGPALGQRGLNIMEFCKAFNAATQKMEQGMPIPVVITAFSDRSFTFAMKTPPASYFLKKAAKVTSGSKTPGRASAGTVTVAQCREIAEAKMADLNANDLDQATKIIAGSARSMGLQVVE</sequence>
<gene>
    <name evidence="1" type="primary">rplK</name>
    <name type="ordered locus">Plav_2725</name>
</gene>
<keyword id="KW-0488">Methylation</keyword>
<keyword id="KW-1185">Reference proteome</keyword>
<keyword id="KW-0687">Ribonucleoprotein</keyword>
<keyword id="KW-0689">Ribosomal protein</keyword>
<keyword id="KW-0694">RNA-binding</keyword>
<keyword id="KW-0699">rRNA-binding</keyword>
<comment type="function">
    <text evidence="1">Forms part of the ribosomal stalk which helps the ribosome interact with GTP-bound translation factors.</text>
</comment>
<comment type="subunit">
    <text evidence="1">Part of the ribosomal stalk of the 50S ribosomal subunit. Interacts with L10 and the large rRNA to form the base of the stalk. L10 forms an elongated spine to which L12 dimers bind in a sequential fashion forming a multimeric L10(L12)X complex.</text>
</comment>
<comment type="PTM">
    <text evidence="1">One or more lysine residues are methylated.</text>
</comment>
<comment type="similarity">
    <text evidence="1">Belongs to the universal ribosomal protein uL11 family.</text>
</comment>